<evidence type="ECO:0000255" key="1"/>
<evidence type="ECO:0000256" key="2">
    <source>
        <dbReference type="SAM" id="MobiDB-lite"/>
    </source>
</evidence>
<evidence type="ECO:0000269" key="3">
    <source>
    </source>
</evidence>
<evidence type="ECO:0000269" key="4">
    <source>
    </source>
</evidence>
<evidence type="ECO:0000269" key="5">
    <source>
    </source>
</evidence>
<evidence type="ECO:0000303" key="6">
    <source>
    </source>
</evidence>
<evidence type="ECO:0000303" key="7">
    <source>
    </source>
</evidence>
<evidence type="ECO:0000305" key="8">
    <source>
    </source>
</evidence>
<evidence type="ECO:0000312" key="9">
    <source>
        <dbReference type="EMBL" id="CAJ71439.1"/>
    </source>
</evidence>
<evidence type="ECO:0007744" key="10">
    <source>
        <dbReference type="PDB" id="6HIF"/>
    </source>
</evidence>
<name>HDH_KUEST</name>
<protein>
    <recommendedName>
        <fullName evidence="6">Hydrazine dehydrogenase</fullName>
        <shortName evidence="6">HDH</shortName>
        <ecNumber evidence="3">1.7.2.8</ecNumber>
    </recommendedName>
    <alternativeName>
        <fullName evidence="6">Octaheme c-type cytochrome kustc0694</fullName>
    </alternativeName>
</protein>
<proteinExistence type="evidence at protein level"/>
<feature type="signal peptide" evidence="1">
    <location>
        <begin position="1"/>
        <end position="32"/>
    </location>
</feature>
<feature type="chain" id="PRO_0000441263" description="Hydrazine dehydrogenase">
    <location>
        <begin position="33"/>
        <end position="582"/>
    </location>
</feature>
<feature type="region of interest" description="Disordered" evidence="2">
    <location>
        <begin position="561"/>
        <end position="582"/>
    </location>
</feature>
<feature type="compositionally biased region" description="Basic and acidic residues" evidence="2">
    <location>
        <begin position="567"/>
        <end position="582"/>
    </location>
</feature>
<feature type="binding site" description="covalent" evidence="5 10">
    <location>
        <position position="121"/>
    </location>
    <ligand>
        <name>heme c</name>
        <dbReference type="ChEBI" id="CHEBI:61717"/>
        <label>1</label>
    </ligand>
</feature>
<feature type="binding site" description="covalent" evidence="5 10">
    <location>
        <position position="124"/>
    </location>
    <ligand>
        <name>heme c</name>
        <dbReference type="ChEBI" id="CHEBI:61717"/>
        <label>1</label>
    </ligand>
</feature>
<feature type="binding site" description="axial binding residue" evidence="5 10">
    <location>
        <position position="125"/>
    </location>
    <ligand>
        <name>heme c</name>
        <dbReference type="ChEBI" id="CHEBI:61717"/>
        <label>1</label>
    </ligand>
    <ligandPart>
        <name>Fe</name>
        <dbReference type="ChEBI" id="CHEBI:18248"/>
    </ligandPart>
</feature>
<feature type="binding site" description="axial binding residue" evidence="5 10">
    <location>
        <position position="141"/>
    </location>
    <ligand>
        <name>heme c</name>
        <dbReference type="ChEBI" id="CHEBI:61717"/>
        <label>3</label>
    </ligand>
    <ligandPart>
        <name>Fe</name>
        <dbReference type="ChEBI" id="CHEBI:18248"/>
    </ligandPart>
</feature>
<feature type="binding site" description="covalent" evidence="5 10">
    <location>
        <position position="151"/>
    </location>
    <ligand>
        <name>heme c</name>
        <dbReference type="ChEBI" id="CHEBI:61717"/>
        <label>2</label>
    </ligand>
</feature>
<feature type="binding site" description="covalent" evidence="5 10">
    <location>
        <position position="154"/>
    </location>
    <ligand>
        <name>heme c</name>
        <dbReference type="ChEBI" id="CHEBI:61717"/>
        <label>2</label>
    </ligand>
</feature>
<feature type="binding site" description="axial binding residue" evidence="5 10">
    <location>
        <position position="155"/>
    </location>
    <ligand>
        <name>heme c</name>
        <dbReference type="ChEBI" id="CHEBI:61717"/>
        <label>2</label>
    </ligand>
    <ligandPart>
        <name>Fe</name>
        <dbReference type="ChEBI" id="CHEBI:18248"/>
    </ligandPart>
</feature>
<feature type="binding site" description="axial binding residue" evidence="5 10">
    <location>
        <position position="159"/>
    </location>
    <ligand>
        <name>heme c</name>
        <dbReference type="ChEBI" id="CHEBI:61717"/>
        <label>1</label>
    </ligand>
    <ligandPart>
        <name>Fe</name>
        <dbReference type="ChEBI" id="CHEBI:18248"/>
    </ligandPart>
</feature>
<feature type="binding site" description="covalent" evidence="5 10">
    <location>
        <position position="170"/>
    </location>
    <ligand>
        <name>heme c</name>
        <dbReference type="ChEBI" id="CHEBI:61717"/>
        <label>3</label>
    </ligand>
</feature>
<feature type="binding site" description="covalent" evidence="5 10">
    <location>
        <position position="175"/>
    </location>
    <ligand>
        <name>heme c</name>
        <dbReference type="ChEBI" id="CHEBI:61717"/>
        <label>3</label>
    </ligand>
</feature>
<feature type="binding site" description="axial binding residue" evidence="5 10">
    <location>
        <position position="176"/>
    </location>
    <ligand>
        <name>heme c</name>
        <dbReference type="ChEBI" id="CHEBI:61717"/>
        <label>3</label>
    </ligand>
    <ligandPart>
        <name>Fe</name>
        <dbReference type="ChEBI" id="CHEBI:18248"/>
    </ligandPart>
</feature>
<feature type="binding site" description="axial binding residue" evidence="5 10">
    <location>
        <position position="191"/>
    </location>
    <ligand>
        <name>heme c</name>
        <dbReference type="ChEBI" id="CHEBI:61717"/>
        <label>6</label>
    </ligand>
    <ligandPart>
        <name>Fe</name>
        <dbReference type="ChEBI" id="CHEBI:18248"/>
    </ligandPart>
</feature>
<feature type="binding site" description="covalent" evidence="5 10">
    <location>
        <position position="216"/>
    </location>
    <ligand>
        <name>heme c</name>
        <dbReference type="ChEBI" id="CHEBI:61717"/>
        <label>4</label>
    </ligand>
</feature>
<feature type="binding site" description="covalent" evidence="5 10">
    <location>
        <position position="219"/>
    </location>
    <ligand>
        <name>heme c</name>
        <dbReference type="ChEBI" id="CHEBI:61717"/>
        <label>4</label>
    </ligand>
</feature>
<feature type="binding site" description="axial binding residue" evidence="5 10">
    <location>
        <position position="220"/>
    </location>
    <ligand>
        <name>heme c</name>
        <dbReference type="ChEBI" id="CHEBI:61717"/>
        <label>4</label>
    </ligand>
    <ligandPart>
        <name>Fe</name>
        <dbReference type="ChEBI" id="CHEBI:18248"/>
    </ligandPart>
</feature>
<feature type="binding site" description="covalent" evidence="5 10">
    <location>
        <position position="227"/>
    </location>
    <ligand>
        <name>heme c</name>
        <dbReference type="ChEBI" id="CHEBI:61717"/>
        <label>5</label>
    </ligand>
</feature>
<feature type="binding site" description="covalent" evidence="5 10">
    <location>
        <position position="230"/>
    </location>
    <ligand>
        <name>heme c</name>
        <dbReference type="ChEBI" id="CHEBI:61717"/>
        <label>5</label>
    </ligand>
</feature>
<feature type="binding site" description="axial binding residue" evidence="5 10">
    <location>
        <position position="231"/>
    </location>
    <ligand>
        <name>heme c</name>
        <dbReference type="ChEBI" id="CHEBI:61717"/>
        <label>5</label>
    </ligand>
    <ligandPart>
        <name>Fe</name>
        <dbReference type="ChEBI" id="CHEBI:18248"/>
    </ligandPart>
</feature>
<feature type="binding site" description="axial binding residue" evidence="5 10">
    <location>
        <position position="234"/>
    </location>
    <ligand>
        <name>heme c</name>
        <dbReference type="ChEBI" id="CHEBI:61717"/>
        <label>2</label>
    </ligand>
    <ligandPart>
        <name>Fe</name>
        <dbReference type="ChEBI" id="CHEBI:18248"/>
    </ligandPart>
</feature>
<feature type="binding site" description="covalent" evidence="5 10">
    <location>
        <position position="247"/>
    </location>
    <ligand>
        <name>heme c</name>
        <dbReference type="ChEBI" id="CHEBI:61717"/>
        <label>6</label>
    </ligand>
</feature>
<feature type="binding site" description="covalent" evidence="5 10">
    <location>
        <position position="250"/>
    </location>
    <ligand>
        <name>heme c</name>
        <dbReference type="ChEBI" id="CHEBI:61717"/>
        <label>6</label>
    </ligand>
</feature>
<feature type="binding site" description="axial binding residue" evidence="5 10">
    <location>
        <position position="251"/>
    </location>
    <ligand>
        <name>heme c</name>
        <dbReference type="ChEBI" id="CHEBI:61717"/>
        <label>6</label>
    </ligand>
    <ligandPart>
        <name>Fe</name>
        <dbReference type="ChEBI" id="CHEBI:18248"/>
    </ligandPart>
</feature>
<feature type="binding site" description="axial binding residue" evidence="5 10">
    <location>
        <position position="267"/>
    </location>
    <ligand>
        <name>heme c</name>
        <dbReference type="ChEBI" id="CHEBI:61717"/>
        <label>8</label>
    </ligand>
    <ligandPart>
        <name>Fe</name>
        <dbReference type="ChEBI" id="CHEBI:18248"/>
    </ligandPart>
</feature>
<feature type="binding site" description="covalent" evidence="5 10">
    <location>
        <position position="297"/>
    </location>
    <ligand>
        <name>heme c</name>
        <dbReference type="ChEBI" id="CHEBI:61717"/>
        <label>7</label>
    </ligand>
</feature>
<feature type="binding site" description="covalent" evidence="5 10">
    <location>
        <position position="300"/>
    </location>
    <ligand>
        <name>heme c</name>
        <dbReference type="ChEBI" id="CHEBI:61717"/>
        <label>7</label>
    </ligand>
</feature>
<feature type="binding site" description="axial binding residue" evidence="5 10">
    <location>
        <position position="301"/>
    </location>
    <ligand>
        <name>heme c</name>
        <dbReference type="ChEBI" id="CHEBI:61717"/>
        <label>7</label>
    </ligand>
    <ligandPart>
        <name>Fe</name>
        <dbReference type="ChEBI" id="CHEBI:18248"/>
    </ligandPart>
</feature>
<feature type="binding site" description="axial binding residue" evidence="5 10">
    <location>
        <position position="306"/>
    </location>
    <ligand>
        <name>heme c</name>
        <dbReference type="ChEBI" id="CHEBI:61717"/>
        <label>5</label>
    </ligand>
    <ligandPart>
        <name>Fe</name>
        <dbReference type="ChEBI" id="CHEBI:18248"/>
    </ligandPart>
</feature>
<feature type="binding site" description="covalent" evidence="5 10">
    <location>
        <position position="342"/>
    </location>
    <ligand>
        <name>heme c</name>
        <dbReference type="ChEBI" id="CHEBI:61717"/>
        <label>8</label>
    </ligand>
</feature>
<feature type="binding site" description="covalent" evidence="5 10">
    <location>
        <position position="345"/>
    </location>
    <ligand>
        <name>heme c</name>
        <dbReference type="ChEBI" id="CHEBI:61717"/>
        <label>8</label>
    </ligand>
</feature>
<feature type="binding site" description="axial binding residue" evidence="5 10">
    <location>
        <position position="346"/>
    </location>
    <ligand>
        <name>heme c</name>
        <dbReference type="ChEBI" id="CHEBI:61717"/>
        <label>8</label>
    </ligand>
    <ligandPart>
        <name>Fe</name>
        <dbReference type="ChEBI" id="CHEBI:18248"/>
    </ligandPart>
</feature>
<feature type="binding site" description="axial binding residue" evidence="5 10">
    <location>
        <position position="454"/>
    </location>
    <ligand>
        <name>heme c</name>
        <dbReference type="ChEBI" id="CHEBI:61717"/>
        <label>7</label>
    </ligand>
    <ligandPart>
        <name>Fe</name>
        <dbReference type="ChEBI" id="CHEBI:18248"/>
    </ligandPart>
</feature>
<feature type="binding site" description="covalent; ligand shared between tetrameric partners" evidence="5">
    <location>
        <position position="462"/>
    </location>
    <ligand>
        <name>heme c</name>
        <dbReference type="ChEBI" id="CHEBI:61717"/>
        <label>4</label>
    </ligand>
</feature>
<sequence length="582" mass="65577">MRKFLKVTLASALIGCGVIGTVSSLMVKEAKAVEIITHWVPHEVYGMPGEPDNSGKVFFSGLKAKYMGYPKDAQRSPYPGKYSKFWKTLPAYRYYIPDYMYNRDEVRPSNPIKGTFKLEQCVACHSVMTPGIVRDYNKSAHSKAEPAPTGCDTCHGNNHQKLTMPSSKACGTAECHETQYNEQGQGGIGSHASCSSFAQVECAWSIERPPGDTAGCTFCHTSPEERCSTCHQRHQFDPAVARRSEQCKTCHWGKDHRDWEAYDIGLHGTVYQVNKWDTEQFDFSKKLSDADYVGPTCQYCHMRGGHHNVQRASIVYTSMGMSMADRGAPLWKEKRDRWVSICDDCHSPRFARENLQAMDESVKDASLKYRETFKVAEDLLIDGVLDPMPKDLCPDWSGQHIWSLKIGAYHDGEAYGGTTGESGEFRMSNCTDVERLCFESVGYFQTYIYKGMAHGSWNDATYSDGSFGMDRWLVNVKQNASRARRLAALEKKVGISWQPEQFWKTGEWLDQLTGPYIVKNHPGKTIFDLCPDPGWLDTHHAPAEEVEYIERKLKELGITAGSHSAHHHESGHDPAARSMKEH</sequence>
<keyword id="KW-0002">3D-structure</keyword>
<keyword id="KW-0349">Heme</keyword>
<keyword id="KW-0408">Iron</keyword>
<keyword id="KW-0479">Metal-binding</keyword>
<keyword id="KW-0560">Oxidoreductase</keyword>
<keyword id="KW-0732">Signal</keyword>
<comment type="function">
    <text evidence="3 7">Catalyzes the four-electron oxidation of hydrazine to N2 (PubMed:21964329). The electrons derived from hydrazine oxidation may be transferred to the quinone pool and exploited to promote the generation of proton-motive force (pmf) across the anammoxosome membrane (PubMed:21964329, PubMed:23210799). Is involved in anaerobic ammonium oxidation (anammox), a biological process in which nitrite is used as the electron acceptor in the conversion of ammonium to dinitrogen gas (N2) and water; this bacterial process has a major role in the Earth's nitrogen cycle and has been estimated to synthesize up to 50% of the dinitrogen gas emitted into our atmosphere from the oceans (PubMed:21964329). Cannot oxidize hydroxylamine to NO (PubMed:21964329).</text>
</comment>
<comment type="catalytic activity">
    <reaction evidence="3">
        <text>hydrazine + 4 Fe(III)-[cytochrome c] = N2 + 4 Fe(II)-[cytochrome c] + 4 H(+)</text>
        <dbReference type="Rhea" id="RHEA:23232"/>
        <dbReference type="Rhea" id="RHEA-COMP:10350"/>
        <dbReference type="Rhea" id="RHEA-COMP:14399"/>
        <dbReference type="ChEBI" id="CHEBI:15378"/>
        <dbReference type="ChEBI" id="CHEBI:15571"/>
        <dbReference type="ChEBI" id="CHEBI:17997"/>
        <dbReference type="ChEBI" id="CHEBI:29033"/>
        <dbReference type="ChEBI" id="CHEBI:29034"/>
        <dbReference type="EC" id="1.7.2.8"/>
    </reaction>
</comment>
<comment type="cofactor">
    <cofactor evidence="5">
        <name>heme c</name>
        <dbReference type="ChEBI" id="CHEBI:61717"/>
    </cofactor>
    <text evidence="5">Binds 8 heme c groups per subunit (PubMed:31001586). One of them, heme-4, is an atypical heme c (unusual heme c binding motif CXXXXCH) and is called P460 (PubMed:31001586). Catalysis takes place at heme-4/P460 (PubMed:31001586). The other c-type hemes mediate electron transfer to the external electron acceptor, which is a cytochrome c-type protein (PubMed:31001586).</text>
</comment>
<comment type="activity regulation">
    <text evidence="3">Is strongly and competitively inhibited by NO and hydroxylamine.</text>
</comment>
<comment type="pathway">
    <text evidence="3">Nitrogen metabolism.</text>
</comment>
<comment type="subunit">
    <text evidence="4 5">Homotrimer; subunits are linked by two covalent bonds between Tyr-462 of one subunit and heme P460 of an adjacent subunit (PubMed:25962914). May form 24-mer of an octamer of trimers (PubMed:31001586).</text>
</comment>
<comment type="subcellular location">
    <subcellularLocation>
        <location evidence="4">Anammoxosome</location>
    </subcellularLocation>
</comment>
<comment type="induction">
    <text evidence="3">Is highly expressed (at protein level).</text>
</comment>
<comment type="sequence caution" evidence="8">
    <conflict type="erroneous initiation">
        <sequence resource="EMBL-CDS" id="CAJ71439"/>
    </conflict>
    <text>Extended N-terminus.</text>
</comment>
<reference key="1">
    <citation type="journal article" date="2006" name="Nature">
        <title>Deciphering the evolution and metabolism of an anammox bacterium from a community genome.</title>
        <authorList>
            <person name="Strous M."/>
            <person name="Pelletier E."/>
            <person name="Mangenot S."/>
            <person name="Rattei T."/>
            <person name="Lehner A."/>
            <person name="Taylor M.W."/>
            <person name="Horn M."/>
            <person name="Daims H."/>
            <person name="Bartol-Mavel D."/>
            <person name="Wincker P."/>
            <person name="Barbe V."/>
            <person name="Fonknechten N."/>
            <person name="Vallenet D."/>
            <person name="Segurens B."/>
            <person name="Schenowitz-Truong C."/>
            <person name="Medigue C."/>
            <person name="Collingro A."/>
            <person name="Snel B."/>
            <person name="Dutilh B.E."/>
            <person name="Op den Camp H.J."/>
            <person name="van der Drift C."/>
            <person name="Cirpus I."/>
            <person name="van de Pas-Schoonen K.T."/>
            <person name="Harhangi H.R."/>
            <person name="van Niftrik L."/>
            <person name="Schmid M."/>
            <person name="Keltjens J."/>
            <person name="van de Vossenberg J."/>
            <person name="Kartal B."/>
            <person name="Meier H."/>
            <person name="Frishman D."/>
            <person name="Huynen M.A."/>
            <person name="Mewes H."/>
            <person name="Weissenbach J."/>
            <person name="Jetten M.S.M."/>
            <person name="Wagner M."/>
            <person name="Le Paslier D."/>
        </authorList>
    </citation>
    <scope>NUCLEOTIDE SEQUENCE [LARGE SCALE GENOMIC DNA]</scope>
</reference>
<reference key="2">
    <citation type="journal article" date="2011" name="Nature">
        <title>Molecular mechanism of anaerobic ammonium oxidation.</title>
        <authorList>
            <person name="Kartal B."/>
            <person name="Maalcke W.J."/>
            <person name="de Almeida N.M."/>
            <person name="Cirpus I."/>
            <person name="Gloerich J."/>
            <person name="Geerts W."/>
            <person name="Op den Camp H.J."/>
            <person name="Harhangi H.R."/>
            <person name="Janssen-Megens E.M."/>
            <person name="Francoijs K.J."/>
            <person name="Stunnenberg H.G."/>
            <person name="Keltjens J.T."/>
            <person name="Jetten M.S."/>
            <person name="Strous M."/>
        </authorList>
    </citation>
    <scope>FUNCTION</scope>
    <scope>CATALYTIC ACTIVITY</scope>
    <scope>SUBSTRATE SPECIFICITY</scope>
    <scope>ACTIVITY REGULATION</scope>
    <scope>PATHWAY</scope>
    <scope>INDUCTION</scope>
</reference>
<reference key="3">
    <citation type="journal article" date="2013" name="FEMS Microbiol. Rev.">
        <title>How to make a living from anaerobic ammonium oxidation.</title>
        <authorList>
            <person name="Kartal B."/>
            <person name="de Almeida N.M."/>
            <person name="Maalcke W.J."/>
            <person name="Op den Camp H.J."/>
            <person name="Jetten M.S."/>
            <person name="Keltjens J.T."/>
        </authorList>
    </citation>
    <scope>REVIEW</scope>
    <scope>FUNCTION</scope>
    <scope>COFACTOR</scope>
    <scope>TRANSLATIONAL START SITE</scope>
</reference>
<reference key="4">
    <citation type="journal article" date="2015" name="J. Bacteriol.">
        <title>Immunogold Localization of Key Metabolic Enzymes in the Anammoxosome and on the Tubule-Like Structures of Kuenenia stuttgartiensis.</title>
        <authorList>
            <person name="de Almeida N.M."/>
            <person name="Neumann S."/>
            <person name="Mesman R.J."/>
            <person name="Ferousi C."/>
            <person name="Keltjens J.T."/>
            <person name="Jetten M.S."/>
            <person name="Kartal B."/>
            <person name="van Niftrik L."/>
        </authorList>
    </citation>
    <scope>SUBUNIT</scope>
    <scope>SUBCELLULAR LOCATION</scope>
</reference>
<reference evidence="10" key="5">
    <citation type="journal article" date="2019" name="Sci. Adv.">
        <title>A 192-heme electron transfer network in the hydrazine dehydrogenase complex.</title>
        <authorList>
            <person name="Akram M."/>
            <person name="Dietl A."/>
            <person name="Mersdorf U."/>
            <person name="Prinz S."/>
            <person name="Maalcke W."/>
            <person name="Keltjens J."/>
            <person name="Ferousi C."/>
            <person name="de Almeida N.M."/>
            <person name="Reimann J."/>
            <person name="Kartal B."/>
            <person name="Jetten M.S.M."/>
            <person name="Parey K."/>
            <person name="Barends T.R.M."/>
        </authorList>
    </citation>
    <scope>X-RAY CRYSTALLOGRAPHY (2.80 ANGSTROMS) IN COMPLEX WITH HEME C</scope>
    <scope>COFACTOR</scope>
    <scope>SUBUNIT</scope>
</reference>
<organism>
    <name type="scientific">Kuenenia stuttgartiensis</name>
    <dbReference type="NCBI Taxonomy" id="174633"/>
    <lineage>
        <taxon>Bacteria</taxon>
        <taxon>Pseudomonadati</taxon>
        <taxon>Planctomycetota</taxon>
        <taxon>Candidatus Brocadiia</taxon>
        <taxon>Candidatus Brocadiales</taxon>
        <taxon>Candidatus Brocadiaceae</taxon>
        <taxon>Candidatus Kuenenia</taxon>
    </lineage>
</organism>
<accession>Q1PW30</accession>
<dbReference type="EC" id="1.7.2.8" evidence="3"/>
<dbReference type="EMBL" id="CT573073">
    <property type="protein sequence ID" value="CAJ71439.1"/>
    <property type="status" value="ALT_INIT"/>
    <property type="molecule type" value="Genomic_DNA"/>
</dbReference>
<dbReference type="PDB" id="6HIF">
    <property type="method" value="X-ray"/>
    <property type="resolution" value="2.80 A"/>
    <property type="chains" value="A/B/C/D/E/F/G/H/I/J/K/L/M/N/O/P/Q/R/S/T/U/V/W/X=1-582"/>
</dbReference>
<dbReference type="PDBsum" id="6HIF"/>
<dbReference type="EMDB" id="EMD-0205"/>
<dbReference type="EMDB" id="EMD-0206"/>
<dbReference type="EMDB" id="EMD-0207"/>
<dbReference type="SMR" id="Q1PW30"/>
<dbReference type="KEGG" id="ag:CAJ71439"/>
<dbReference type="OrthoDB" id="223737at2"/>
<dbReference type="BioCyc" id="MetaCyc:MONOMER-19883"/>
<dbReference type="GO" id="GO:0044222">
    <property type="term" value="C:anammoxosome"/>
    <property type="evidence" value="ECO:0000314"/>
    <property type="project" value="CACAO"/>
</dbReference>
<dbReference type="GO" id="GO:0020037">
    <property type="term" value="F:heme binding"/>
    <property type="evidence" value="ECO:0000314"/>
    <property type="project" value="UniProtKB"/>
</dbReference>
<dbReference type="GO" id="GO:0033740">
    <property type="term" value="F:hydroxylamine oxidoreductase activity"/>
    <property type="evidence" value="ECO:0007669"/>
    <property type="project" value="UniProtKB-EC"/>
</dbReference>
<dbReference type="GO" id="GO:0042802">
    <property type="term" value="F:identical protein binding"/>
    <property type="evidence" value="ECO:0000314"/>
    <property type="project" value="UniProtKB"/>
</dbReference>
<dbReference type="GO" id="GO:0046872">
    <property type="term" value="F:metal ion binding"/>
    <property type="evidence" value="ECO:0007669"/>
    <property type="project" value="UniProtKB-KW"/>
</dbReference>
<dbReference type="GO" id="GO:0070207">
    <property type="term" value="P:protein homotrimerization"/>
    <property type="evidence" value="ECO:0000314"/>
    <property type="project" value="UniProtKB"/>
</dbReference>
<dbReference type="Gene3D" id="1.10.780.10">
    <property type="entry name" value="Hydroxylamine Oxidoreductase, Chain A, domain 1"/>
    <property type="match status" value="1"/>
</dbReference>
<dbReference type="Gene3D" id="1.20.850.10">
    <property type="entry name" value="Hydroxylamine Oxidoreductase, Chain A, domain 2"/>
    <property type="match status" value="1"/>
</dbReference>
<dbReference type="InterPro" id="IPR036280">
    <property type="entry name" value="Multihaem_cyt_sf"/>
</dbReference>
<dbReference type="Pfam" id="PF13447">
    <property type="entry name" value="Multi-haem_cyto"/>
    <property type="match status" value="1"/>
</dbReference>
<dbReference type="SUPFAM" id="SSF48695">
    <property type="entry name" value="Multiheme cytochromes"/>
    <property type="match status" value="1"/>
</dbReference>
<dbReference type="PROSITE" id="PS51008">
    <property type="entry name" value="MULTIHEME_CYTC"/>
    <property type="match status" value="1"/>
</dbReference>
<gene>
    <name evidence="9" type="ORF">kustc0694</name>
</gene>